<gene>
    <name evidence="14" type="primary">ctnna1</name>
</gene>
<comment type="function">
    <text evidence="1 8">Associates with the cytoplasmic domain of a variety of cadherins, forming catenin and cadherin complexes which are further linked to the actin filament network and is thereby involved in cell-cell adhesion (By similarity). Required for embryonic development, via maintenance of adherens junctions that facilitate the maintenance of the epithelial barrier (PubMed:27612508).</text>
</comment>
<comment type="subunit">
    <text evidence="3">Interacts with ctnnb1, jupa and cdh2 (PubMed:10456847). Interacts with cdh1 during early stages of oogenesis, interaction is no longer present when oocyte develops into the unfertilized egg (PubMed:10456847).</text>
</comment>
<comment type="subcellular location">
    <subcellularLocation>
        <location evidence="3 7">Cell junction</location>
        <location evidence="3 7">Adherens junction</location>
    </subcellularLocation>
    <subcellularLocation>
        <location evidence="1">Cytoplasm</location>
        <location evidence="1">Cytoskeleton</location>
    </subcellularLocation>
    <subcellularLocation>
        <location evidence="1">Cell membrane</location>
        <topology evidence="10">Peripheral membrane protein</topology>
        <orientation evidence="1">Cytoplasmic side</orientation>
    </subcellularLocation>
    <subcellularLocation>
        <location evidence="3 4 8">Cell junction</location>
    </subcellularLocation>
    <subcellularLocation>
        <location evidence="3">Cytoplasm</location>
    </subcellularLocation>
    <subcellularLocation>
        <location evidence="7">Nucleus</location>
    </subcellularLocation>
    <text evidence="3">Localized in the ooplasm during the initial stages of oogenesis.</text>
</comment>
<comment type="tissue specificity">
    <text evidence="3">Expressed in the skin (at protein level) (PubMed:10456847). Expressed in the ovary (PubMed:10456847).</text>
</comment>
<comment type="developmental stage">
    <text evidence="3 4 5 6 7">Expressed in the cortical ooplasm during the primary growth phase, expression increases during the cortical alveolus stage at areas of contact between the oocyte and the surrounding follicle cells (at protein level) (PubMed:10456847). Expressed in the oocyte cortex during stage 2 of follicle development (at protein level) (PubMed:10456847). Expressed at the oocyte border, cell-cell contacts surrounding the follicle cells and microvilli projecting into the vitelline envelope during stage 3 of follicle development (at protein level) (PubMed:10456847). Expressed in myocardial cells during cardiogenesis at the 20 somite stage (at protein level) (PubMed:16319113). Expressed at the primary lumen in the ventral region of intersegmental vessels, expression expands from ventral to dorsal as the primary lumen forms at 30 hpf (at protein level) (PubMed:20736288). Expressed in oocytes during oogenesis from initial stages of development until developed unfertilized eggs, there is a slight decrease in abundance during the vitellogenic stage (PubMed:10456847). Ubiquitously expressed in embryos at 8 and 22 hpf (PubMed:19582161, PubMed:20371743).</text>
</comment>
<comment type="disruption phenotype">
    <text evidence="8">Embryos during somitogenesis initially show slight deformations such as indentations in the spherical morphology of the embryo, additionally ruptured weak points are evident in the external epiblast from the 12 somite stage onwards (PubMed:27612508). Embryos proceed to show tissue rupture and swelling of the yolk resulting in lysis of the embryo and a complete embryonically lethal phenotype by 24hpf (PubMed:27612508).</text>
</comment>
<comment type="similarity">
    <text evidence="10">Belongs to the vinculin/alpha-catenin family.</text>
</comment>
<keyword id="KW-0130">Cell adhesion</keyword>
<keyword id="KW-0965">Cell junction</keyword>
<keyword id="KW-1003">Cell membrane</keyword>
<keyword id="KW-0963">Cytoplasm</keyword>
<keyword id="KW-0206">Cytoskeleton</keyword>
<keyword id="KW-0472">Membrane</keyword>
<keyword id="KW-0539">Nucleus</keyword>
<keyword id="KW-1185">Reference proteome</keyword>
<accession>Q9PVF8</accession>
<accession>A0A0R4IH88</accession>
<accession>Q6NYB2</accession>
<name>CTNA1_DANRE</name>
<organism evidence="13">
    <name type="scientific">Danio rerio</name>
    <name type="common">Zebrafish</name>
    <name type="synonym">Brachydanio rerio</name>
    <dbReference type="NCBI Taxonomy" id="7955"/>
    <lineage>
        <taxon>Eukaryota</taxon>
        <taxon>Metazoa</taxon>
        <taxon>Chordata</taxon>
        <taxon>Craniata</taxon>
        <taxon>Vertebrata</taxon>
        <taxon>Euteleostomi</taxon>
        <taxon>Actinopterygii</taxon>
        <taxon>Neopterygii</taxon>
        <taxon>Teleostei</taxon>
        <taxon>Ostariophysi</taxon>
        <taxon>Cypriniformes</taxon>
        <taxon>Danionidae</taxon>
        <taxon>Danioninae</taxon>
        <taxon>Danio</taxon>
    </lineage>
</organism>
<proteinExistence type="evidence at protein level"/>
<feature type="chain" id="PRO_0000460251" description="Catenin alpha-1">
    <location>
        <begin position="1"/>
        <end position="907"/>
    </location>
</feature>
<feature type="region of interest" description="Disordered" evidence="2">
    <location>
        <begin position="870"/>
        <end position="895"/>
    </location>
</feature>
<feature type="compositionally biased region" description="Basic and acidic residues" evidence="2">
    <location>
        <begin position="870"/>
        <end position="879"/>
    </location>
</feature>
<feature type="compositionally biased region" description="Basic residues" evidence="2">
    <location>
        <begin position="882"/>
        <end position="892"/>
    </location>
</feature>
<protein>
    <recommendedName>
        <fullName evidence="14">Catenin alpha-1</fullName>
    </recommendedName>
    <alternativeName>
        <fullName evidence="9">Alpha E-catenin</fullName>
    </alternativeName>
</protein>
<reference evidence="11" key="1">
    <citation type="journal article" date="1999" name="Biol. Reprod.">
        <title>Cadherin-catenin complexes during zebrafish oogenesis: heterotypic junctions between oocytes and follicle cells.</title>
        <authorList>
            <person name="Cerda J."/>
            <person name="Reidenbach S."/>
            <person name="Praetzel S."/>
            <person name="Franke W.W."/>
        </authorList>
    </citation>
    <scope>NUCLEOTIDE SEQUENCE [MRNA]</scope>
    <scope>INTERACTION WITH CDH1; CTNNB1; JUPA AND CDH2</scope>
    <scope>SUBCELLULAR LOCATION</scope>
    <scope>TISSUE SPECIFICITY</scope>
    <scope>DEVELOPMENTAL STAGE</scope>
</reference>
<reference evidence="13" key="2">
    <citation type="journal article" date="2013" name="Nature">
        <title>The zebrafish reference genome sequence and its relationship to the human genome.</title>
        <authorList>
            <person name="Howe K."/>
            <person name="Clark M.D."/>
            <person name="Torroja C.F."/>
            <person name="Torrance J."/>
            <person name="Berthelot C."/>
            <person name="Muffato M."/>
            <person name="Collins J.E."/>
            <person name="Humphray S."/>
            <person name="McLaren K."/>
            <person name="Matthews L."/>
            <person name="McLaren S."/>
            <person name="Sealy I."/>
            <person name="Caccamo M."/>
            <person name="Churcher C."/>
            <person name="Scott C."/>
            <person name="Barrett J.C."/>
            <person name="Koch R."/>
            <person name="Rauch G.J."/>
            <person name="White S."/>
            <person name="Chow W."/>
            <person name="Kilian B."/>
            <person name="Quintais L.T."/>
            <person name="Guerra-Assuncao J.A."/>
            <person name="Zhou Y."/>
            <person name="Gu Y."/>
            <person name="Yen J."/>
            <person name="Vogel J.H."/>
            <person name="Eyre T."/>
            <person name="Redmond S."/>
            <person name="Banerjee R."/>
            <person name="Chi J."/>
            <person name="Fu B."/>
            <person name="Langley E."/>
            <person name="Maguire S.F."/>
            <person name="Laird G.K."/>
            <person name="Lloyd D."/>
            <person name="Kenyon E."/>
            <person name="Donaldson S."/>
            <person name="Sehra H."/>
            <person name="Almeida-King J."/>
            <person name="Loveland J."/>
            <person name="Trevanion S."/>
            <person name="Jones M."/>
            <person name="Quail M."/>
            <person name="Willey D."/>
            <person name="Hunt A."/>
            <person name="Burton J."/>
            <person name="Sims S."/>
            <person name="McLay K."/>
            <person name="Plumb B."/>
            <person name="Davis J."/>
            <person name="Clee C."/>
            <person name="Oliver K."/>
            <person name="Clark R."/>
            <person name="Riddle C."/>
            <person name="Elliot D."/>
            <person name="Threadgold G."/>
            <person name="Harden G."/>
            <person name="Ware D."/>
            <person name="Begum S."/>
            <person name="Mortimore B."/>
            <person name="Kerry G."/>
            <person name="Heath P."/>
            <person name="Phillimore B."/>
            <person name="Tracey A."/>
            <person name="Corby N."/>
            <person name="Dunn M."/>
            <person name="Johnson C."/>
            <person name="Wood J."/>
            <person name="Clark S."/>
            <person name="Pelan S."/>
            <person name="Griffiths G."/>
            <person name="Smith M."/>
            <person name="Glithero R."/>
            <person name="Howden P."/>
            <person name="Barker N."/>
            <person name="Lloyd C."/>
            <person name="Stevens C."/>
            <person name="Harley J."/>
            <person name="Holt K."/>
            <person name="Panagiotidis G."/>
            <person name="Lovell J."/>
            <person name="Beasley H."/>
            <person name="Henderson C."/>
            <person name="Gordon D."/>
            <person name="Auger K."/>
            <person name="Wright D."/>
            <person name="Collins J."/>
            <person name="Raisen C."/>
            <person name="Dyer L."/>
            <person name="Leung K."/>
            <person name="Robertson L."/>
            <person name="Ambridge K."/>
            <person name="Leongamornlert D."/>
            <person name="McGuire S."/>
            <person name="Gilderthorp R."/>
            <person name="Griffiths C."/>
            <person name="Manthravadi D."/>
            <person name="Nichol S."/>
            <person name="Barker G."/>
            <person name="Whitehead S."/>
            <person name="Kay M."/>
            <person name="Brown J."/>
            <person name="Murnane C."/>
            <person name="Gray E."/>
            <person name="Humphries M."/>
            <person name="Sycamore N."/>
            <person name="Barker D."/>
            <person name="Saunders D."/>
            <person name="Wallis J."/>
            <person name="Babbage A."/>
            <person name="Hammond S."/>
            <person name="Mashreghi-Mohammadi M."/>
            <person name="Barr L."/>
            <person name="Martin S."/>
            <person name="Wray P."/>
            <person name="Ellington A."/>
            <person name="Matthews N."/>
            <person name="Ellwood M."/>
            <person name="Woodmansey R."/>
            <person name="Clark G."/>
            <person name="Cooper J."/>
            <person name="Tromans A."/>
            <person name="Grafham D."/>
            <person name="Skuce C."/>
            <person name="Pandian R."/>
            <person name="Andrews R."/>
            <person name="Harrison E."/>
            <person name="Kimberley A."/>
            <person name="Garnett J."/>
            <person name="Fosker N."/>
            <person name="Hall R."/>
            <person name="Garner P."/>
            <person name="Kelly D."/>
            <person name="Bird C."/>
            <person name="Palmer S."/>
            <person name="Gehring I."/>
            <person name="Berger A."/>
            <person name="Dooley C.M."/>
            <person name="Ersan-Urun Z."/>
            <person name="Eser C."/>
            <person name="Geiger H."/>
            <person name="Geisler M."/>
            <person name="Karotki L."/>
            <person name="Kirn A."/>
            <person name="Konantz J."/>
            <person name="Konantz M."/>
            <person name="Oberlander M."/>
            <person name="Rudolph-Geiger S."/>
            <person name="Teucke M."/>
            <person name="Lanz C."/>
            <person name="Raddatz G."/>
            <person name="Osoegawa K."/>
            <person name="Zhu B."/>
            <person name="Rapp A."/>
            <person name="Widaa S."/>
            <person name="Langford C."/>
            <person name="Yang F."/>
            <person name="Schuster S.C."/>
            <person name="Carter N.P."/>
            <person name="Harrow J."/>
            <person name="Ning Z."/>
            <person name="Herrero J."/>
            <person name="Searle S.M."/>
            <person name="Enright A."/>
            <person name="Geisler R."/>
            <person name="Plasterk R.H."/>
            <person name="Lee C."/>
            <person name="Westerfield M."/>
            <person name="de Jong P.J."/>
            <person name="Zon L.I."/>
            <person name="Postlethwait J.H."/>
            <person name="Nusslein-Volhard C."/>
            <person name="Hubbard T.J."/>
            <person name="Roest Crollius H."/>
            <person name="Rogers J."/>
            <person name="Stemple D.L."/>
        </authorList>
    </citation>
    <scope>NUCLEOTIDE SEQUENCE [LARGE SCALE GENOMIC DNA]</scope>
    <source>
        <strain evidence="13">Tuebingen</strain>
    </source>
</reference>
<reference evidence="12" key="3">
    <citation type="submission" date="2004-03" db="EMBL/GenBank/DDBJ databases">
        <authorList>
            <consortium name="NIH - Zebrafish Gene Collection (ZGC) project"/>
        </authorList>
    </citation>
    <scope>NUCLEOTIDE SEQUENCE [LARGE SCALE MRNA]</scope>
    <source>
        <tissue evidence="12">Embryo</tissue>
    </source>
</reference>
<reference evidence="10" key="4">
    <citation type="journal article" date="2006" name="Development">
        <title>Heart and soul/PRKCi and nagie oko/Mpp5 regulate myocardial coherence and remodeling during cardiac morphogenesis.</title>
        <authorList>
            <person name="Rohr S."/>
            <person name="Bit-Avragim N."/>
            <person name="Abdelilah-Seyfried S."/>
        </authorList>
    </citation>
    <scope>SUBCELLULAR LOCATION</scope>
    <scope>DEVELOPMENTAL STAGE</scope>
</reference>
<reference evidence="10" key="5">
    <citation type="journal article" date="2009" name="PLoS ONE">
        <title>Heritable and lineage-specific gene knockdown in zebrafish embryo.</title>
        <authorList>
            <person name="Dong M."/>
            <person name="Fu Y.F."/>
            <person name="Du T.T."/>
            <person name="Jing C.B."/>
            <person name="Fu C.T."/>
            <person name="Chen Y."/>
            <person name="Jin Y."/>
            <person name="Deng M."/>
            <person name="Liu T.X."/>
        </authorList>
    </citation>
    <scope>DEVELOPMENTAL STAGE</scope>
</reference>
<reference evidence="10" key="6">
    <citation type="journal article" date="2010" name="Blood">
        <title>An evolutionarily conserved PTEN-C/EBPalpha-CTNNA1 axis controls myeloid development and transformation.</title>
        <authorList>
            <person name="Fu C.T."/>
            <person name="Zhu K.Y."/>
            <person name="Mi J.Q."/>
            <person name="Liu Y.F."/>
            <person name="Murray S.T."/>
            <person name="Fu Y.F."/>
            <person name="Ren C.G."/>
            <person name="Dong Z.W."/>
            <person name="Liu Y.J."/>
            <person name="Dong M."/>
            <person name="Jin Y."/>
            <person name="Chen Y."/>
            <person name="Deng M."/>
            <person name="Zhang W."/>
            <person name="Chen B."/>
            <person name="Breslin P."/>
            <person name="Chen S.J."/>
            <person name="Chen Z."/>
            <person name="Becker M.W."/>
            <person name="Zhu J."/>
            <person name="Zhang J.W."/>
            <person name="Liu T.X."/>
        </authorList>
    </citation>
    <scope>DEVELOPMENTAL STAGE</scope>
</reference>
<reference evidence="10" key="7">
    <citation type="journal article" date="2010" name="Development">
        <title>Moesin1 and Ve-cadherin are required in endothelial cells during in vivo tubulogenesis.</title>
        <authorList>
            <person name="Wang Y."/>
            <person name="Kaiser M.S."/>
            <person name="Larson J.D."/>
            <person name="Nasevicius A."/>
            <person name="Clark K.J."/>
            <person name="Wadman S.A."/>
            <person name="Roberg-Perez S.E."/>
            <person name="Ekker S.C."/>
            <person name="Hackett P.B."/>
            <person name="McGrail M."/>
            <person name="Essner J.J."/>
        </authorList>
    </citation>
    <scope>SUBCELLULAR LOCATION</scope>
    <scope>DEVELOPMENTAL STAGE</scope>
</reference>
<reference evidence="10" key="8">
    <citation type="journal article" date="2016" name="Biol. Open">
        <title>alphaE-catenin-dependent mechanotransduction is essential for proper convergent extension in zebrafish.</title>
        <authorList>
            <person name="Han M.K."/>
            <person name="Hoijman E."/>
            <person name="Noel E."/>
            <person name="Garric L."/>
            <person name="Bakkers J."/>
            <person name="de Rooij J."/>
        </authorList>
    </citation>
    <scope>FUNCTION</scope>
    <scope>SUBCELLULAR LOCATION</scope>
    <scope>DISRUPTION PHENOTYPE</scope>
</reference>
<sequence length="907" mass="100519">MTSINTANINFKWDPKSLEIRTLAVERLLEPLVTQVTTLVNSSNKGPSNKKKGRSKKAHVLAASVDEATQNFLEKGEKIAKESQFLKEELTAAVEDVRKQGESMKMASGEFAEDPCSSVKRGNMVRAARALLSAVTHLLVLADMADVYQLLLQLKLVEENLMKVRNAGTEQDLGIQYKALKPEVDKLNMMAAKRQQELKDVHHKDQMAAARGVLQRNVPMLYTASRACLQHPDVAAYKANRDLIYKQLQHAVSGISNAAQATSSEDSSFSQTAGGGELAYALNNFDKQIIVDPLSFSEERFRPSLEERLESIISGAALMADSSCTRDDRRERIVAECNSVRQALQDLLSEYMGNAGRKEKSDALNTAIDRMTKKTRDLRRQLRKAVMDHVSDSFLETNVPLLVLIEAAKNGNEKEVKEYAQVFREHANKLIEVANLACSISNNEEGVKLVRMAASQLETLCPQVINAALALAAKPNSKVAQDNMDLFKDQWEKQVRVLTDAVDDITSIDDFLCVSENHILEDVNKCVIALQEKDVDGLDRTAGAIRGRAARVVHVVTSEMDNYMPGVYTEKVLEATKLLTETVMPRFTEQVEAAVEALSANNGQPVDENEFIDASRLVYDGVRDIRKAVLMIRTPEELDDSDFETEDFDSRSRTSVQTEDDQLIAGQSARAIMAQLPQEQKAKIAEQVASFQEEKSKLDAEVSKWDDSGNDIIVLAKQMCMIMMEMTDFTRGKGPLKNTSDVISAAKKIAEAGSRMDKLGRAIADQCPDSACKQDLLAYLQRIALFCHQLNICSKVKAEVQNLGGELVVSGLDSAMSLIQAAKNLMNSVVSTVKASYVASTKYQKSQDMQSLNMPAISWKMKAPEKKPLVKREKLDDGQTNKVKRSSQKKHINPVQALSEFKAMDSI</sequence>
<evidence type="ECO:0000250" key="1">
    <source>
        <dbReference type="UniProtKB" id="P26231"/>
    </source>
</evidence>
<evidence type="ECO:0000256" key="2">
    <source>
        <dbReference type="SAM" id="MobiDB-lite"/>
    </source>
</evidence>
<evidence type="ECO:0000269" key="3">
    <source>
    </source>
</evidence>
<evidence type="ECO:0000269" key="4">
    <source>
    </source>
</evidence>
<evidence type="ECO:0000269" key="5">
    <source>
    </source>
</evidence>
<evidence type="ECO:0000269" key="6">
    <source>
    </source>
</evidence>
<evidence type="ECO:0000269" key="7">
    <source>
    </source>
</evidence>
<evidence type="ECO:0000269" key="8">
    <source>
    </source>
</evidence>
<evidence type="ECO:0000303" key="9">
    <source>
    </source>
</evidence>
<evidence type="ECO:0000305" key="10"/>
<evidence type="ECO:0000312" key="11">
    <source>
        <dbReference type="EMBL" id="AAD56591.1"/>
    </source>
</evidence>
<evidence type="ECO:0000312" key="12">
    <source>
        <dbReference type="EMBL" id="AAH66669.1"/>
    </source>
</evidence>
<evidence type="ECO:0000312" key="13">
    <source>
        <dbReference type="Proteomes" id="UP000000437"/>
    </source>
</evidence>
<evidence type="ECO:0000312" key="14">
    <source>
        <dbReference type="ZFIN" id="ZDB-GENE-991207-24"/>
    </source>
</evidence>
<dbReference type="EMBL" id="CU659677">
    <property type="status" value="NOT_ANNOTATED_CDS"/>
    <property type="molecule type" value="Genomic_DNA"/>
</dbReference>
<dbReference type="EMBL" id="CU681852">
    <property type="status" value="NOT_ANNOTATED_CDS"/>
    <property type="molecule type" value="Genomic_DNA"/>
</dbReference>
<dbReference type="EMBL" id="AF099737">
    <property type="protein sequence ID" value="AAD56591.1"/>
    <property type="molecule type" value="mRNA"/>
</dbReference>
<dbReference type="EMBL" id="BC066669">
    <property type="protein sequence ID" value="AAH66669.1"/>
    <property type="molecule type" value="mRNA"/>
</dbReference>
<dbReference type="RefSeq" id="NP_571531.1">
    <property type="nucleotide sequence ID" value="NM_131456.2"/>
</dbReference>
<dbReference type="SMR" id="Q9PVF8"/>
<dbReference type="FunCoup" id="Q9PVF8">
    <property type="interactions" value="2862"/>
</dbReference>
<dbReference type="STRING" id="7955.ENSDARP00000132933"/>
<dbReference type="PaxDb" id="7955-ENSDARP00000052440"/>
<dbReference type="DNASU" id="30741"/>
<dbReference type="Ensembl" id="ENSDART00000171009">
    <property type="protein sequence ID" value="ENSDARP00000132933"/>
    <property type="gene ID" value="ENSDARG00000102441"/>
</dbReference>
<dbReference type="GeneID" id="30741"/>
<dbReference type="KEGG" id="dre:30741"/>
<dbReference type="AGR" id="ZFIN:ZDB-GENE-991207-24"/>
<dbReference type="CTD" id="1495"/>
<dbReference type="ZFIN" id="ZDB-GENE-991207-24">
    <property type="gene designation" value="ctnna1"/>
</dbReference>
<dbReference type="eggNOG" id="KOG3681">
    <property type="taxonomic scope" value="Eukaryota"/>
</dbReference>
<dbReference type="OMA" id="QENMDMF"/>
<dbReference type="OrthoDB" id="6376697at2759"/>
<dbReference type="TreeFam" id="TF313686"/>
<dbReference type="Reactome" id="R-DRE-5218920">
    <property type="pathway name" value="VEGFR2 mediated vascular permeability"/>
</dbReference>
<dbReference type="Reactome" id="R-DRE-525793">
    <property type="pathway name" value="Myogenesis"/>
</dbReference>
<dbReference type="Reactome" id="R-DRE-5626467">
    <property type="pathway name" value="RHO GTPases activate IQGAPs"/>
</dbReference>
<dbReference type="Proteomes" id="UP000000437">
    <property type="component" value="Chromosome 24"/>
</dbReference>
<dbReference type="Bgee" id="ENSDARG00000102441">
    <property type="expression patterns" value="Expressed in early embryo and 26 other cell types or tissues"/>
</dbReference>
<dbReference type="GO" id="GO:0015629">
    <property type="term" value="C:actin cytoskeleton"/>
    <property type="evidence" value="ECO:0007669"/>
    <property type="project" value="InterPro"/>
</dbReference>
<dbReference type="GO" id="GO:0005912">
    <property type="term" value="C:adherens junction"/>
    <property type="evidence" value="ECO:0000314"/>
    <property type="project" value="ZFIN"/>
</dbReference>
<dbReference type="GO" id="GO:0016342">
    <property type="term" value="C:catenin complex"/>
    <property type="evidence" value="ECO:0000314"/>
    <property type="project" value="ZFIN"/>
</dbReference>
<dbReference type="GO" id="GO:0005938">
    <property type="term" value="C:cell cortex"/>
    <property type="evidence" value="ECO:0000314"/>
    <property type="project" value="ZFIN"/>
</dbReference>
<dbReference type="GO" id="GO:0005911">
    <property type="term" value="C:cell-cell junction"/>
    <property type="evidence" value="ECO:0000314"/>
    <property type="project" value="UniProtKB"/>
</dbReference>
<dbReference type="GO" id="GO:0005902">
    <property type="term" value="C:microvillus"/>
    <property type="evidence" value="ECO:0000314"/>
    <property type="project" value="ZFIN"/>
</dbReference>
<dbReference type="GO" id="GO:0005634">
    <property type="term" value="C:nucleus"/>
    <property type="evidence" value="ECO:0007669"/>
    <property type="project" value="UniProtKB-SubCell"/>
</dbReference>
<dbReference type="GO" id="GO:0051015">
    <property type="term" value="F:actin filament binding"/>
    <property type="evidence" value="ECO:0000314"/>
    <property type="project" value="ZFIN"/>
</dbReference>
<dbReference type="GO" id="GO:0008013">
    <property type="term" value="F:beta-catenin binding"/>
    <property type="evidence" value="ECO:0000318"/>
    <property type="project" value="GO_Central"/>
</dbReference>
<dbReference type="GO" id="GO:0045296">
    <property type="term" value="F:cadherin binding"/>
    <property type="evidence" value="ECO:0000314"/>
    <property type="project" value="ZFIN"/>
</dbReference>
<dbReference type="GO" id="GO:0005198">
    <property type="term" value="F:structural molecule activity"/>
    <property type="evidence" value="ECO:0007669"/>
    <property type="project" value="InterPro"/>
</dbReference>
<dbReference type="GO" id="GO:0034334">
    <property type="term" value="P:adherens junction maintenance"/>
    <property type="evidence" value="ECO:0000315"/>
    <property type="project" value="UniProtKB"/>
</dbReference>
<dbReference type="GO" id="GO:0016477">
    <property type="term" value="P:cell migration"/>
    <property type="evidence" value="ECO:0000318"/>
    <property type="project" value="GO_Central"/>
</dbReference>
<dbReference type="GO" id="GO:0098609">
    <property type="term" value="P:cell-cell adhesion"/>
    <property type="evidence" value="ECO:0000318"/>
    <property type="project" value="GO_Central"/>
</dbReference>
<dbReference type="GO" id="GO:0043009">
    <property type="term" value="P:chordate embryonic development"/>
    <property type="evidence" value="ECO:0000315"/>
    <property type="project" value="UniProtKB"/>
</dbReference>
<dbReference type="GO" id="GO:0001894">
    <property type="term" value="P:tissue homeostasis"/>
    <property type="evidence" value="ECO:0000315"/>
    <property type="project" value="ZFIN"/>
</dbReference>
<dbReference type="FunFam" id="1.20.120.230:FF:000006">
    <property type="entry name" value="Catenin alpha 1"/>
    <property type="match status" value="1"/>
</dbReference>
<dbReference type="FunFam" id="1.20.120.230:FF:000007">
    <property type="entry name" value="Catenin alpha 1"/>
    <property type="match status" value="1"/>
</dbReference>
<dbReference type="FunFam" id="1.20.120.230:FF:000008">
    <property type="entry name" value="Catenin alpha 1"/>
    <property type="match status" value="1"/>
</dbReference>
<dbReference type="FunFam" id="1.20.120.230:FF:000011">
    <property type="entry name" value="Catenin alpha 1"/>
    <property type="match status" value="1"/>
</dbReference>
<dbReference type="FunFam" id="1.20.120.230:FF:000012">
    <property type="entry name" value="Catenin alpha-2 isoform 1"/>
    <property type="match status" value="1"/>
</dbReference>
<dbReference type="Gene3D" id="6.10.250.2510">
    <property type="match status" value="1"/>
</dbReference>
<dbReference type="Gene3D" id="1.20.120.230">
    <property type="entry name" value="Alpha-catenin/vinculin-like"/>
    <property type="match status" value="5"/>
</dbReference>
<dbReference type="InterPro" id="IPR036723">
    <property type="entry name" value="Alpha-catenin/vinculin-like_sf"/>
</dbReference>
<dbReference type="InterPro" id="IPR001033">
    <property type="entry name" value="Alpha_catenin"/>
</dbReference>
<dbReference type="InterPro" id="IPR006077">
    <property type="entry name" value="Vinculin/catenin"/>
</dbReference>
<dbReference type="InterPro" id="IPR000633">
    <property type="entry name" value="Vinculin_CS"/>
</dbReference>
<dbReference type="PANTHER" id="PTHR18914">
    <property type="entry name" value="ALPHA CATENIN"/>
    <property type="match status" value="1"/>
</dbReference>
<dbReference type="PANTHER" id="PTHR18914:SF24">
    <property type="entry name" value="CATENIN ALPHA-1"/>
    <property type="match status" value="1"/>
</dbReference>
<dbReference type="Pfam" id="PF01044">
    <property type="entry name" value="Vinculin"/>
    <property type="match status" value="1"/>
</dbReference>
<dbReference type="PRINTS" id="PR00805">
    <property type="entry name" value="ALPHACATENIN"/>
</dbReference>
<dbReference type="SUPFAM" id="SSF47220">
    <property type="entry name" value="alpha-catenin/vinculin-like"/>
    <property type="match status" value="4"/>
</dbReference>
<dbReference type="PROSITE" id="PS00663">
    <property type="entry name" value="VINCULIN_1"/>
    <property type="match status" value="1"/>
</dbReference>